<name>DPOL_PSHV1</name>
<accession>Q6UDK1</accession>
<organism>
    <name type="scientific">Psittacid herpesvirus 1 (isolate Amazon parrot/-/97-0001/1997)</name>
    <name type="common">PsHV-1</name>
    <name type="synonym">Pacheco's disease virus</name>
    <dbReference type="NCBI Taxonomy" id="670426"/>
    <lineage>
        <taxon>Viruses</taxon>
        <taxon>Duplodnaviria</taxon>
        <taxon>Heunggongvirae</taxon>
        <taxon>Peploviricota</taxon>
        <taxon>Herviviricetes</taxon>
        <taxon>Herpesvirales</taxon>
        <taxon>Orthoherpesviridae</taxon>
        <taxon>Alphaherpesvirinae</taxon>
        <taxon>Iltovirus</taxon>
        <taxon>Iltovirus psittacidalpha1</taxon>
        <taxon>Psittacid alphaherpesvirus 1</taxon>
    </lineage>
</organism>
<reference key="1">
    <citation type="journal article" date="2006" name="J. Virol.">
        <title>Psittacid herpesvirus 1 and infectious laryngotracheitis virus: Comparative genome sequence analysis of two avian alphaherpesviruses.</title>
        <authorList>
            <person name="Thureen D.R."/>
            <person name="Keeler C.L. Jr."/>
        </authorList>
    </citation>
    <scope>NUCLEOTIDE SEQUENCE [LARGE SCALE GENOMIC DNA]</scope>
</reference>
<dbReference type="EC" id="2.7.7.7"/>
<dbReference type="EC" id="3.1.26.4"/>
<dbReference type="EMBL" id="AY372243">
    <property type="protein sequence ID" value="AAQ73709.1"/>
    <property type="molecule type" value="Genomic_DNA"/>
</dbReference>
<dbReference type="RefSeq" id="NP_944403.1">
    <property type="nucleotide sequence ID" value="NC_005264.1"/>
</dbReference>
<dbReference type="SMR" id="Q6UDK1"/>
<dbReference type="GeneID" id="2656967"/>
<dbReference type="KEGG" id="vg:2656967"/>
<dbReference type="Proteomes" id="UP000006840">
    <property type="component" value="Segment"/>
</dbReference>
<dbReference type="GO" id="GO:0042025">
    <property type="term" value="C:host cell nucleus"/>
    <property type="evidence" value="ECO:0007669"/>
    <property type="project" value="UniProtKB-SubCell"/>
</dbReference>
<dbReference type="GO" id="GO:0003677">
    <property type="term" value="F:DNA binding"/>
    <property type="evidence" value="ECO:0007669"/>
    <property type="project" value="UniProtKB-KW"/>
</dbReference>
<dbReference type="GO" id="GO:0003887">
    <property type="term" value="F:DNA-directed DNA polymerase activity"/>
    <property type="evidence" value="ECO:0007669"/>
    <property type="project" value="UniProtKB-KW"/>
</dbReference>
<dbReference type="GO" id="GO:0000166">
    <property type="term" value="F:nucleotide binding"/>
    <property type="evidence" value="ECO:0007669"/>
    <property type="project" value="InterPro"/>
</dbReference>
<dbReference type="GO" id="GO:0004523">
    <property type="term" value="F:RNA-DNA hybrid ribonuclease activity"/>
    <property type="evidence" value="ECO:0007669"/>
    <property type="project" value="UniProtKB-EC"/>
</dbReference>
<dbReference type="GO" id="GO:0006261">
    <property type="term" value="P:DNA-templated DNA replication"/>
    <property type="evidence" value="ECO:0007669"/>
    <property type="project" value="TreeGrafter"/>
</dbReference>
<dbReference type="GO" id="GO:0039693">
    <property type="term" value="P:viral DNA genome replication"/>
    <property type="evidence" value="ECO:0007669"/>
    <property type="project" value="UniProtKB-KW"/>
</dbReference>
<dbReference type="Gene3D" id="1.10.132.60">
    <property type="entry name" value="DNA polymerase family B, C-terminal domain"/>
    <property type="match status" value="1"/>
</dbReference>
<dbReference type="Gene3D" id="3.30.342.10">
    <property type="entry name" value="DNA Polymerase, chain B, domain 1"/>
    <property type="match status" value="1"/>
</dbReference>
<dbReference type="Gene3D" id="1.10.287.690">
    <property type="entry name" value="Helix hairpin bin"/>
    <property type="match status" value="1"/>
</dbReference>
<dbReference type="Gene3D" id="3.90.1600.10">
    <property type="entry name" value="Palm domain of DNA polymerase"/>
    <property type="match status" value="1"/>
</dbReference>
<dbReference type="Gene3D" id="3.30.420.10">
    <property type="entry name" value="Ribonuclease H-like superfamily/Ribonuclease H"/>
    <property type="match status" value="1"/>
</dbReference>
<dbReference type="InterPro" id="IPR006172">
    <property type="entry name" value="DNA-dir_DNA_pol_B"/>
</dbReference>
<dbReference type="InterPro" id="IPR017964">
    <property type="entry name" value="DNA-dir_DNA_pol_B_CS"/>
</dbReference>
<dbReference type="InterPro" id="IPR006133">
    <property type="entry name" value="DNA-dir_DNA_pol_B_exonuc"/>
</dbReference>
<dbReference type="InterPro" id="IPR006134">
    <property type="entry name" value="DNA-dir_DNA_pol_B_multi_dom"/>
</dbReference>
<dbReference type="InterPro" id="IPR043502">
    <property type="entry name" value="DNA/RNA_pol_sf"/>
</dbReference>
<dbReference type="InterPro" id="IPR042087">
    <property type="entry name" value="DNA_pol_B_thumb"/>
</dbReference>
<dbReference type="InterPro" id="IPR023211">
    <property type="entry name" value="DNA_pol_palm_dom_sf"/>
</dbReference>
<dbReference type="InterPro" id="IPR050240">
    <property type="entry name" value="DNA_pol_type-B"/>
</dbReference>
<dbReference type="InterPro" id="IPR012337">
    <property type="entry name" value="RNaseH-like_sf"/>
</dbReference>
<dbReference type="InterPro" id="IPR036397">
    <property type="entry name" value="RNaseH_sf"/>
</dbReference>
<dbReference type="PANTHER" id="PTHR10322">
    <property type="entry name" value="DNA POLYMERASE CATALYTIC SUBUNIT"/>
    <property type="match status" value="1"/>
</dbReference>
<dbReference type="PANTHER" id="PTHR10322:SF23">
    <property type="entry name" value="DNA POLYMERASE DELTA CATALYTIC SUBUNIT"/>
    <property type="match status" value="1"/>
</dbReference>
<dbReference type="Pfam" id="PF00136">
    <property type="entry name" value="DNA_pol_B"/>
    <property type="match status" value="1"/>
</dbReference>
<dbReference type="Pfam" id="PF03104">
    <property type="entry name" value="DNA_pol_B_exo1"/>
    <property type="match status" value="1"/>
</dbReference>
<dbReference type="PRINTS" id="PR00106">
    <property type="entry name" value="DNAPOLB"/>
</dbReference>
<dbReference type="SMART" id="SM00486">
    <property type="entry name" value="POLBc"/>
    <property type="match status" value="1"/>
</dbReference>
<dbReference type="SUPFAM" id="SSF56672">
    <property type="entry name" value="DNA/RNA polymerases"/>
    <property type="match status" value="1"/>
</dbReference>
<dbReference type="SUPFAM" id="SSF53098">
    <property type="entry name" value="Ribonuclease H-like"/>
    <property type="match status" value="1"/>
</dbReference>
<dbReference type="PROSITE" id="PS00116">
    <property type="entry name" value="DNA_POLYMERASE_B"/>
    <property type="match status" value="1"/>
</dbReference>
<evidence type="ECO:0000250" key="1"/>
<evidence type="ECO:0000305" key="2"/>
<gene>
    <name type="primary">UL30</name>
</gene>
<feature type="chain" id="PRO_0000406797" description="DNA polymerase catalytic subunit">
    <location>
        <begin position="1"/>
        <end position="1081"/>
    </location>
</feature>
<sequence>MAAFDNPVFNKTLTPVAGAGPNFRATYYTSVTEFTHVCPRSLIDGERLGTSVGKVADPPRFTVDDRTVDMFSHDHGAWPMRMEHWPGTSAERRRDKNALRFHEFHVYDIIEAHETAQSCSAWLHPRFMETLRPSGTVVTLLGMSACGKRVAVHVYGQQPYFYAKKSEIDASIGISTPGELAHAMAASLRSAASRRSTFVEATAESFVIDVVQRRDIYYYESREEEYYRVKSCSAKYISFLCDNFCRGVKKYEGGIDATTRFAVDNELFTFGWYRFKPCAGAIQIRDVTRHSTSANVEVNCTVENLEVIRGRADWPDYKLLSFDIECKAGGANDLAFPTAERIEDVVIQISAVVSSLLTRRVEHEILFSLGTCQLPEDIADHVKVCECGSEFELLLCFMTFLKQFSPEFVTGYNILGFDWGFMYNKMVNIYGMRLDGYGKANAWGTFKVQDMPHSGRGKFRNVKINGIVNFDMFSIIYQKIKLCSYKLNSVAETVLGEKKHDLSYKDLPRLFALGPEERGKIGAYCLQDSRLATKLFFKLVPHMELSAVAQLACITLTRAVFDGQQVRVFTCLLQRARKIGVVLPEKSDRFTFSAHAAGDQDDGGRSVGYQGAKVLDPDVGFHVNPVMVFDFASLYPSIIQSNNLCYSTMTHNPAAIAHLEEGTDYLRVEVQGRVFFFVREHVRRSLLAELLTDWLNMRKALRAQIPLAATEDEKVLLDMQQIAIKVICNSVYGFTGVMNGMLPCLEVAATVTAIGRDMLLKTKQYIEENWREYSNIRERFFPAMAHEGVPQYSVAVIYGDTDSVFVSFKGVPVACLVASGDAMAAEITNALFRRPVKLECEKVFTKLLMIAKKKYIGVIHTGKMMMRGVDMVRKSNCRFVNDTAKALLNLVFYDEDVATAAASSALVDVSALPRGLSKLGARVREAHAALSSPALDVRDFVMTSELSKAPKYYASSKLAHLTVYRKKIARNEEPPQVKDRIEYVIIAPGQRIQGDPFREKETDLVSSLAEDPNWVTAHKLRLNADYYFSALLQTLSVTFNAVFGDAKTAHIVMRSFIPDTLRYPAAVRKILAENTKTLTPM</sequence>
<keyword id="KW-0235">DNA replication</keyword>
<keyword id="KW-0238">DNA-binding</keyword>
<keyword id="KW-0239">DNA-directed DNA polymerase</keyword>
<keyword id="KW-0255">Endonuclease</keyword>
<keyword id="KW-1048">Host nucleus</keyword>
<keyword id="KW-0378">Hydrolase</keyword>
<keyword id="KW-0511">Multifunctional enzyme</keyword>
<keyword id="KW-0540">Nuclease</keyword>
<keyword id="KW-0548">Nucleotidyltransferase</keyword>
<keyword id="KW-1185">Reference proteome</keyword>
<keyword id="KW-0808">Transferase</keyword>
<keyword id="KW-1194">Viral DNA replication</keyword>
<protein>
    <recommendedName>
        <fullName>DNA polymerase catalytic subunit</fullName>
        <ecNumber>2.7.7.7</ecNumber>
        <ecNumber>3.1.26.4</ecNumber>
    </recommendedName>
</protein>
<organismHost>
    <name type="scientific">Amazona oratrix</name>
    <name type="common">yellow-headed parrot</name>
    <dbReference type="NCBI Taxonomy" id="152276"/>
</organismHost>
<comment type="function">
    <text evidence="1">Replicates viral genomic DNA. The replication complex is composed of six viral proteins: the DNA polymerase, processivity factor, primase, primase-associated factor, helicase, and ssDNA-binding protein. Additionally, the polymerase contains an intrinsic ribonuclease H (RNase H) activity that specifically degrades RNA/DNA heteroduplexes or duplex DNA substrates in the 5' to 3' direction. Therefore, it can catalyze the excision of the RNA primers that initiate the synthesis of Okazaki fragments at a replication fork during viral DNA replication (By similarity).</text>
</comment>
<comment type="catalytic activity">
    <reaction>
        <text>DNA(n) + a 2'-deoxyribonucleoside 5'-triphosphate = DNA(n+1) + diphosphate</text>
        <dbReference type="Rhea" id="RHEA:22508"/>
        <dbReference type="Rhea" id="RHEA-COMP:17339"/>
        <dbReference type="Rhea" id="RHEA-COMP:17340"/>
        <dbReference type="ChEBI" id="CHEBI:33019"/>
        <dbReference type="ChEBI" id="CHEBI:61560"/>
        <dbReference type="ChEBI" id="CHEBI:173112"/>
        <dbReference type="EC" id="2.7.7.7"/>
    </reaction>
</comment>
<comment type="catalytic activity">
    <reaction>
        <text>Endonucleolytic cleavage to 5'-phosphomonoester.</text>
        <dbReference type="EC" id="3.1.26.4"/>
    </reaction>
</comment>
<comment type="subunit">
    <text evidence="1">Forms a complex with the ssDNA-binding protein UL29, the DNA polymerase processivity factor, and the alkaline exonuclease. Interacts with the putative helicase-primase complex subunit UL8; this interaction may coordinate leading and lagging strand DNA synthesis at the replication fork (By similarity).</text>
</comment>
<comment type="subcellular location">
    <subcellularLocation>
        <location evidence="2">Host nucleus</location>
    </subcellularLocation>
    <text evidence="1">The protein is present at discrete sites in nuclei, called replication compartments where viral DNA replication occurs.</text>
</comment>
<comment type="similarity">
    <text evidence="2">Belongs to the DNA polymerase type-B family.</text>
</comment>
<proteinExistence type="inferred from homology"/>